<evidence type="ECO:0000250" key="1">
    <source>
        <dbReference type="UniProtKB" id="P00420"/>
    </source>
</evidence>
<evidence type="ECO:0000255" key="2"/>
<evidence type="ECO:0000305" key="3"/>
<proteinExistence type="evidence at transcript level"/>
<comment type="function">
    <text evidence="1">Component of the cytochrome c oxidase, the last enzyme in the mitochondrial electron transport chain which drives oxidative phosphorylation. The respiratory chain contains 3 multisubunit complexes succinate dehydrogenase (complex II, CII), ubiquinol-cytochrome c oxidoreductase (cytochrome b-c1 complex, complex III, CIII) and cytochrome c oxidase (complex IV, CIV), that cooperate to transfer electrons derived from NADH and succinate to molecular oxygen, creating an electrochemical gradient over the inner membrane that drives transmembrane transport and the ATP synthase. Cytochrome c oxidase is the component of the respiratory chain that catalyzes the reduction of oxygen to water. Electrons originating from reduced cytochrome c in the intermembrane space (IMS) are transferred via the dinuclear copper A center (CU(A)) of subunit 2 and heme A of subunit 1 to the active site in subunit 1, a binuclear center (BNC) formed by heme A3 and copper B (CU(B)). The BNC reduces molecular oxygen to 2 water molecules using 4 electrons from cytochrome c in the IMS and 4 protons from the mitochondrial matrix.</text>
</comment>
<comment type="catalytic activity">
    <reaction evidence="1">
        <text>4 Fe(II)-[cytochrome c] + O2 + 8 H(+)(in) = 4 Fe(III)-[cytochrome c] + 2 H2O + 4 H(+)(out)</text>
        <dbReference type="Rhea" id="RHEA:11436"/>
        <dbReference type="Rhea" id="RHEA-COMP:10350"/>
        <dbReference type="Rhea" id="RHEA-COMP:14399"/>
        <dbReference type="ChEBI" id="CHEBI:15377"/>
        <dbReference type="ChEBI" id="CHEBI:15378"/>
        <dbReference type="ChEBI" id="CHEBI:15379"/>
        <dbReference type="ChEBI" id="CHEBI:29033"/>
        <dbReference type="ChEBI" id="CHEBI:29034"/>
        <dbReference type="EC" id="7.1.1.9"/>
    </reaction>
    <physiologicalReaction direction="left-to-right" evidence="1">
        <dbReference type="Rhea" id="RHEA:11437"/>
    </physiologicalReaction>
</comment>
<comment type="subunit">
    <text evidence="1">Component of the cytochrome c oxidase (complex IV, CIV), a multisubunit enzyme composed of a catalytic core of 3 subunits and several supernumerary subunits. The complex exists as a monomer or a dimer and forms supercomplexes (SCs) in the inner mitochondrial membrane with ubiquinol-cytochrome c oxidoreductase (cytochrome b-c1 complex, complex III, CIII).</text>
</comment>
<comment type="subcellular location">
    <subcellularLocation>
        <location evidence="1">Mitochondrion inner membrane</location>
        <topology evidence="1">Multi-pass membrane protein</topology>
    </subcellularLocation>
</comment>
<comment type="similarity">
    <text evidence="3">Belongs to the cytochrome c oxidase subunit 3 family.</text>
</comment>
<keyword id="KW-0472">Membrane</keyword>
<keyword id="KW-0496">Mitochondrion</keyword>
<keyword id="KW-0999">Mitochondrion inner membrane</keyword>
<keyword id="KW-1278">Translocase</keyword>
<keyword id="KW-0812">Transmembrane</keyword>
<keyword id="KW-1133">Transmembrane helix</keyword>
<reference key="1">
    <citation type="journal article" date="1988" name="Nucleic Acids Res.">
        <title>Nucleotide sequence of the Zea mays mitochondrial cytochrome oxidase subunit III gene.</title>
        <authorList>
            <person name="McCarty D.M."/>
            <person name="Hehman G.L."/>
            <person name="Hauswirth W.W."/>
        </authorList>
    </citation>
    <scope>NUCLEOTIDE SEQUENCE [GENOMIC DNA]</scope>
</reference>
<reference key="2">
    <citation type="submission" date="1992-04" db="EMBL/GenBank/DDBJ databases">
        <authorList>
            <person name="Kaleikau E.K."/>
            <person name="Walbot V."/>
        </authorList>
    </citation>
    <scope>NUCLEOTIDE SEQUENCE</scope>
    <source>
        <strain>cv. B37N</strain>
    </source>
</reference>
<name>COX3_MAIZE</name>
<sequence>MIESQRHSYHLVDPSPWPISGSLGALATTVGGVMYMHSFQGGATLLSLGLIFLLYTMFVWWRDVLRESTLEGHHTKAVQLGPRYGSILFIVSEVMSFFLFFWASSHSSLAPTVEIGGIWPPKGIGVLDPWEIPLLNTPILPSSGAAVTWAHHAILAGKEKRAVYALVATVLLALVSTGFQGMEYYQAPSTISDSIYGSTFLLATGFHGFHVIIGTLFLIVCGIRQYLGHLTKKHHVGFEAAAWYWHFVDVVRLFPFVSIYWWGGT</sequence>
<protein>
    <recommendedName>
        <fullName>Cytochrome c oxidase subunit 3</fullName>
        <ecNumber>7.1.1.9</ecNumber>
    </recommendedName>
    <alternativeName>
        <fullName>Cytochrome c oxidase polypeptide III</fullName>
    </alternativeName>
</protein>
<dbReference type="EC" id="7.1.1.9"/>
<dbReference type="EMBL" id="X12728">
    <property type="protein sequence ID" value="CAA31221.1"/>
    <property type="molecule type" value="Genomic_DNA"/>
</dbReference>
<dbReference type="EMBL" id="X53055">
    <property type="protein sequence ID" value="CAA37222.1"/>
    <property type="molecule type" value="mRNA"/>
</dbReference>
<dbReference type="SMR" id="P09138"/>
<dbReference type="PaxDb" id="4577-GRMZM2G156536_P01"/>
<dbReference type="MaizeGDB" id="69221"/>
<dbReference type="eggNOG" id="KOG4664">
    <property type="taxonomic scope" value="Eukaryota"/>
</dbReference>
<dbReference type="ExpressionAtlas" id="P09138">
    <property type="expression patterns" value="baseline"/>
</dbReference>
<dbReference type="GO" id="GO:0005743">
    <property type="term" value="C:mitochondrial inner membrane"/>
    <property type="evidence" value="ECO:0007669"/>
    <property type="project" value="UniProtKB-SubCell"/>
</dbReference>
<dbReference type="GO" id="GO:0005739">
    <property type="term" value="C:mitochondrion"/>
    <property type="evidence" value="ECO:0000318"/>
    <property type="project" value="GO_Central"/>
</dbReference>
<dbReference type="GO" id="GO:0004129">
    <property type="term" value="F:cytochrome-c oxidase activity"/>
    <property type="evidence" value="ECO:0007669"/>
    <property type="project" value="UniProtKB-EC"/>
</dbReference>
<dbReference type="GO" id="GO:0006123">
    <property type="term" value="P:mitochondrial electron transport, cytochrome c to oxygen"/>
    <property type="evidence" value="ECO:0000318"/>
    <property type="project" value="GO_Central"/>
</dbReference>
<dbReference type="CDD" id="cd01665">
    <property type="entry name" value="Cyt_c_Oxidase_III"/>
    <property type="match status" value="1"/>
</dbReference>
<dbReference type="FunFam" id="1.10.287.70:FF:000075">
    <property type="entry name" value="Cytochrome c oxidase subunit 3"/>
    <property type="match status" value="1"/>
</dbReference>
<dbReference type="FunFam" id="1.20.120.80:FF:000002">
    <property type="entry name" value="Cytochrome c oxidase subunit 3"/>
    <property type="match status" value="1"/>
</dbReference>
<dbReference type="Gene3D" id="1.10.287.70">
    <property type="match status" value="1"/>
</dbReference>
<dbReference type="Gene3D" id="1.20.120.80">
    <property type="entry name" value="Cytochrome c oxidase, subunit III, four-helix bundle"/>
    <property type="match status" value="1"/>
</dbReference>
<dbReference type="InterPro" id="IPR024791">
    <property type="entry name" value="Cyt_c/ubiquinol_Oxase_su3"/>
</dbReference>
<dbReference type="InterPro" id="IPR033945">
    <property type="entry name" value="Cyt_c_oxase_su3_dom"/>
</dbReference>
<dbReference type="InterPro" id="IPR000298">
    <property type="entry name" value="Cyt_c_oxidase-like_su3"/>
</dbReference>
<dbReference type="InterPro" id="IPR035973">
    <property type="entry name" value="Cyt_c_oxidase_su3-like_sf"/>
</dbReference>
<dbReference type="InterPro" id="IPR013833">
    <property type="entry name" value="Cyt_c_oxidase_su3_a-hlx"/>
</dbReference>
<dbReference type="PANTHER" id="PTHR11403:SF7">
    <property type="entry name" value="CYTOCHROME C OXIDASE SUBUNIT 3"/>
    <property type="match status" value="1"/>
</dbReference>
<dbReference type="PANTHER" id="PTHR11403">
    <property type="entry name" value="CYTOCHROME C OXIDASE SUBUNIT III"/>
    <property type="match status" value="1"/>
</dbReference>
<dbReference type="Pfam" id="PF00510">
    <property type="entry name" value="COX3"/>
    <property type="match status" value="1"/>
</dbReference>
<dbReference type="SUPFAM" id="SSF81452">
    <property type="entry name" value="Cytochrome c oxidase subunit III-like"/>
    <property type="match status" value="1"/>
</dbReference>
<dbReference type="PROSITE" id="PS50253">
    <property type="entry name" value="COX3"/>
    <property type="match status" value="1"/>
</dbReference>
<feature type="chain" id="PRO_0000183806" description="Cytochrome c oxidase subunit 3">
    <location>
        <begin position="1"/>
        <end position="265"/>
    </location>
</feature>
<feature type="transmembrane region" description="Helical" evidence="2">
    <location>
        <begin position="16"/>
        <end position="36"/>
    </location>
</feature>
<feature type="transmembrane region" description="Helical" evidence="2">
    <location>
        <begin position="41"/>
        <end position="61"/>
    </location>
</feature>
<feature type="transmembrane region" description="Helical" evidence="2">
    <location>
        <begin position="84"/>
        <end position="104"/>
    </location>
</feature>
<feature type="transmembrane region" description="Helical" evidence="2">
    <location>
        <begin position="162"/>
        <end position="182"/>
    </location>
</feature>
<feature type="transmembrane region" description="Helical" evidence="2">
    <location>
        <begin position="200"/>
        <end position="220"/>
    </location>
</feature>
<feature type="transmembrane region" description="Helical" evidence="2">
    <location>
        <begin position="242"/>
        <end position="262"/>
    </location>
</feature>
<gene>
    <name type="primary">COX3</name>
</gene>
<accession>P09138</accession>
<organism>
    <name type="scientific">Zea mays</name>
    <name type="common">Maize</name>
    <dbReference type="NCBI Taxonomy" id="4577"/>
    <lineage>
        <taxon>Eukaryota</taxon>
        <taxon>Viridiplantae</taxon>
        <taxon>Streptophyta</taxon>
        <taxon>Embryophyta</taxon>
        <taxon>Tracheophyta</taxon>
        <taxon>Spermatophyta</taxon>
        <taxon>Magnoliopsida</taxon>
        <taxon>Liliopsida</taxon>
        <taxon>Poales</taxon>
        <taxon>Poaceae</taxon>
        <taxon>PACMAD clade</taxon>
        <taxon>Panicoideae</taxon>
        <taxon>Andropogonodae</taxon>
        <taxon>Andropogoneae</taxon>
        <taxon>Tripsacinae</taxon>
        <taxon>Zea</taxon>
    </lineage>
</organism>
<geneLocation type="mitochondrion"/>